<keyword id="KW-0963">Cytoplasm</keyword>
<keyword id="KW-0342">GTP-binding</keyword>
<keyword id="KW-0378">Hydrolase</keyword>
<keyword id="KW-0460">Magnesium</keyword>
<keyword id="KW-0479">Metal-binding</keyword>
<keyword id="KW-0547">Nucleotide-binding</keyword>
<dbReference type="EC" id="3.6.5.-" evidence="1"/>
<dbReference type="EMBL" id="CP000350">
    <property type="protein sequence ID" value="ABJ76930.1"/>
    <property type="molecule type" value="Genomic_DNA"/>
</dbReference>
<dbReference type="SMR" id="Q04Q90"/>
<dbReference type="KEGG" id="lbj:LBJ_2492"/>
<dbReference type="HOGENOM" id="CLU_011747_2_0_12"/>
<dbReference type="Proteomes" id="UP000000656">
    <property type="component" value="Chromosome 1"/>
</dbReference>
<dbReference type="GO" id="GO:0005737">
    <property type="term" value="C:cytoplasm"/>
    <property type="evidence" value="ECO:0007669"/>
    <property type="project" value="UniProtKB-SubCell"/>
</dbReference>
<dbReference type="GO" id="GO:0005525">
    <property type="term" value="F:GTP binding"/>
    <property type="evidence" value="ECO:0007669"/>
    <property type="project" value="UniProtKB-UniRule"/>
</dbReference>
<dbReference type="GO" id="GO:0003924">
    <property type="term" value="F:GTPase activity"/>
    <property type="evidence" value="ECO:0007669"/>
    <property type="project" value="UniProtKB-UniRule"/>
</dbReference>
<dbReference type="GO" id="GO:0000287">
    <property type="term" value="F:magnesium ion binding"/>
    <property type="evidence" value="ECO:0007669"/>
    <property type="project" value="InterPro"/>
</dbReference>
<dbReference type="GO" id="GO:0042254">
    <property type="term" value="P:ribosome biogenesis"/>
    <property type="evidence" value="ECO:0007669"/>
    <property type="project" value="UniProtKB-UniRule"/>
</dbReference>
<dbReference type="CDD" id="cd01898">
    <property type="entry name" value="Obg"/>
    <property type="match status" value="1"/>
</dbReference>
<dbReference type="FunFam" id="2.70.210.12:FF:000001">
    <property type="entry name" value="GTPase Obg"/>
    <property type="match status" value="1"/>
</dbReference>
<dbReference type="Gene3D" id="2.70.210.12">
    <property type="entry name" value="GTP1/OBG domain"/>
    <property type="match status" value="1"/>
</dbReference>
<dbReference type="Gene3D" id="3.40.50.300">
    <property type="entry name" value="P-loop containing nucleotide triphosphate hydrolases"/>
    <property type="match status" value="1"/>
</dbReference>
<dbReference type="HAMAP" id="MF_01454">
    <property type="entry name" value="GTPase_Obg"/>
    <property type="match status" value="1"/>
</dbReference>
<dbReference type="InterPro" id="IPR031167">
    <property type="entry name" value="G_OBG"/>
</dbReference>
<dbReference type="InterPro" id="IPR006073">
    <property type="entry name" value="GTP-bd"/>
</dbReference>
<dbReference type="InterPro" id="IPR014100">
    <property type="entry name" value="GTP-bd_Obg/CgtA"/>
</dbReference>
<dbReference type="InterPro" id="IPR006074">
    <property type="entry name" value="GTP1-OBG_CS"/>
</dbReference>
<dbReference type="InterPro" id="IPR006169">
    <property type="entry name" value="GTP1_OBG_dom"/>
</dbReference>
<dbReference type="InterPro" id="IPR036726">
    <property type="entry name" value="GTP1_OBG_dom_sf"/>
</dbReference>
<dbReference type="InterPro" id="IPR045086">
    <property type="entry name" value="OBG_GTPase"/>
</dbReference>
<dbReference type="InterPro" id="IPR027417">
    <property type="entry name" value="P-loop_NTPase"/>
</dbReference>
<dbReference type="InterPro" id="IPR005225">
    <property type="entry name" value="Small_GTP-bd"/>
</dbReference>
<dbReference type="NCBIfam" id="TIGR02729">
    <property type="entry name" value="Obg_CgtA"/>
    <property type="match status" value="1"/>
</dbReference>
<dbReference type="NCBIfam" id="NF008955">
    <property type="entry name" value="PRK12297.1"/>
    <property type="match status" value="1"/>
</dbReference>
<dbReference type="NCBIfam" id="NF008956">
    <property type="entry name" value="PRK12299.1"/>
    <property type="match status" value="1"/>
</dbReference>
<dbReference type="NCBIfam" id="TIGR00231">
    <property type="entry name" value="small_GTP"/>
    <property type="match status" value="1"/>
</dbReference>
<dbReference type="PANTHER" id="PTHR11702">
    <property type="entry name" value="DEVELOPMENTALLY REGULATED GTP-BINDING PROTEIN-RELATED"/>
    <property type="match status" value="1"/>
</dbReference>
<dbReference type="PANTHER" id="PTHR11702:SF31">
    <property type="entry name" value="MITOCHONDRIAL RIBOSOME-ASSOCIATED GTPASE 2"/>
    <property type="match status" value="1"/>
</dbReference>
<dbReference type="Pfam" id="PF01018">
    <property type="entry name" value="GTP1_OBG"/>
    <property type="match status" value="1"/>
</dbReference>
<dbReference type="Pfam" id="PF01926">
    <property type="entry name" value="MMR_HSR1"/>
    <property type="match status" value="1"/>
</dbReference>
<dbReference type="PIRSF" id="PIRSF002401">
    <property type="entry name" value="GTP_bd_Obg/CgtA"/>
    <property type="match status" value="1"/>
</dbReference>
<dbReference type="PRINTS" id="PR00326">
    <property type="entry name" value="GTP1OBG"/>
</dbReference>
<dbReference type="SUPFAM" id="SSF82051">
    <property type="entry name" value="Obg GTP-binding protein N-terminal domain"/>
    <property type="match status" value="1"/>
</dbReference>
<dbReference type="SUPFAM" id="SSF52540">
    <property type="entry name" value="P-loop containing nucleoside triphosphate hydrolases"/>
    <property type="match status" value="1"/>
</dbReference>
<dbReference type="PROSITE" id="PS51710">
    <property type="entry name" value="G_OBG"/>
    <property type="match status" value="1"/>
</dbReference>
<dbReference type="PROSITE" id="PS00905">
    <property type="entry name" value="GTP1_OBG"/>
    <property type="match status" value="1"/>
</dbReference>
<dbReference type="PROSITE" id="PS51883">
    <property type="entry name" value="OBG"/>
    <property type="match status" value="1"/>
</dbReference>
<proteinExistence type="inferred from homology"/>
<gene>
    <name evidence="1" type="primary">obg</name>
    <name type="ordered locus">LBJ_2492</name>
</gene>
<reference key="1">
    <citation type="journal article" date="2006" name="Proc. Natl. Acad. Sci. U.S.A.">
        <title>Genome reduction in Leptospira borgpetersenii reflects limited transmission potential.</title>
        <authorList>
            <person name="Bulach D.M."/>
            <person name="Zuerner R.L."/>
            <person name="Wilson P."/>
            <person name="Seemann T."/>
            <person name="McGrath A."/>
            <person name="Cullen P.A."/>
            <person name="Davis J."/>
            <person name="Johnson M."/>
            <person name="Kuczek E."/>
            <person name="Alt D.P."/>
            <person name="Peterson-Burch B."/>
            <person name="Coppel R.L."/>
            <person name="Rood J.I."/>
            <person name="Davies J.K."/>
            <person name="Adler B."/>
        </authorList>
    </citation>
    <scope>NUCLEOTIDE SEQUENCE [LARGE SCALE GENOMIC DNA]</scope>
    <source>
        <strain>JB197</strain>
    </source>
</reference>
<protein>
    <recommendedName>
        <fullName evidence="1">GTPase Obg</fullName>
        <ecNumber evidence="1">3.6.5.-</ecNumber>
    </recommendedName>
    <alternativeName>
        <fullName evidence="1">GTP-binding protein Obg</fullName>
    </alternativeName>
</protein>
<organism>
    <name type="scientific">Leptospira borgpetersenii serovar Hardjo-bovis (strain JB197)</name>
    <dbReference type="NCBI Taxonomy" id="355277"/>
    <lineage>
        <taxon>Bacteria</taxon>
        <taxon>Pseudomonadati</taxon>
        <taxon>Spirochaetota</taxon>
        <taxon>Spirochaetia</taxon>
        <taxon>Leptospirales</taxon>
        <taxon>Leptospiraceae</taxon>
        <taxon>Leptospira</taxon>
    </lineage>
</organism>
<accession>Q04Q90</accession>
<sequence length="365" mass="40241">MESFVDEVAIEVFAGHGGAGSVHFRREKYVEFGGPDGGDGGTGGNVIIRPNLSMYTLDKYLSKRKFKAEAGFPGVGDNCSGKKGEDLILFVPLGTQIYDEETGDLLFDFVTDTQEFVVARGGRGGKGNTHFKSSTNQTPRFAQPGEEGEYKFLRLSLKLLADVGIVGLPNAGKSTLISKITDAHPKIAGYAFTTLSPNLGVVKRRGDIFRFTIADIPGIIEGASMGIGLGLSFLRHIERVKGILYLFDASSLDIEEDLKMLRNELFTYNPELLNRPYLIVLNKIDIWDDPEFTKDIISKIIHLGKVIAISADKETNLEKLLEAMDEAFFKDEIEKVLKSTKELKSVSLNESDILGSFENSREIKE</sequence>
<feature type="chain" id="PRO_0000386015" description="GTPase Obg">
    <location>
        <begin position="1"/>
        <end position="365"/>
    </location>
</feature>
<feature type="domain" description="Obg" evidence="2">
    <location>
        <begin position="2"/>
        <end position="160"/>
    </location>
</feature>
<feature type="domain" description="OBG-type G" evidence="1">
    <location>
        <begin position="161"/>
        <end position="329"/>
    </location>
</feature>
<feature type="binding site" evidence="1">
    <location>
        <begin position="167"/>
        <end position="174"/>
    </location>
    <ligand>
        <name>GTP</name>
        <dbReference type="ChEBI" id="CHEBI:37565"/>
    </ligand>
</feature>
<feature type="binding site" evidence="1">
    <location>
        <position position="174"/>
    </location>
    <ligand>
        <name>Mg(2+)</name>
        <dbReference type="ChEBI" id="CHEBI:18420"/>
    </ligand>
</feature>
<feature type="binding site" evidence="1">
    <location>
        <begin position="192"/>
        <end position="196"/>
    </location>
    <ligand>
        <name>GTP</name>
        <dbReference type="ChEBI" id="CHEBI:37565"/>
    </ligand>
</feature>
<feature type="binding site" evidence="1">
    <location>
        <position position="194"/>
    </location>
    <ligand>
        <name>Mg(2+)</name>
        <dbReference type="ChEBI" id="CHEBI:18420"/>
    </ligand>
</feature>
<feature type="binding site" evidence="1">
    <location>
        <begin position="215"/>
        <end position="218"/>
    </location>
    <ligand>
        <name>GTP</name>
        <dbReference type="ChEBI" id="CHEBI:37565"/>
    </ligand>
</feature>
<feature type="binding site" evidence="1">
    <location>
        <begin position="282"/>
        <end position="285"/>
    </location>
    <ligand>
        <name>GTP</name>
        <dbReference type="ChEBI" id="CHEBI:37565"/>
    </ligand>
</feature>
<feature type="binding site" evidence="1">
    <location>
        <begin position="310"/>
        <end position="312"/>
    </location>
    <ligand>
        <name>GTP</name>
        <dbReference type="ChEBI" id="CHEBI:37565"/>
    </ligand>
</feature>
<comment type="function">
    <text evidence="1">An essential GTPase which binds GTP, GDP and possibly (p)ppGpp with moderate affinity, with high nucleotide exchange rates and a fairly low GTP hydrolysis rate. Plays a role in control of the cell cycle, stress response, ribosome biogenesis and in those bacteria that undergo differentiation, in morphogenesis control.</text>
</comment>
<comment type="cofactor">
    <cofactor evidence="1">
        <name>Mg(2+)</name>
        <dbReference type="ChEBI" id="CHEBI:18420"/>
    </cofactor>
</comment>
<comment type="subunit">
    <text evidence="1">Monomer.</text>
</comment>
<comment type="subcellular location">
    <subcellularLocation>
        <location evidence="1">Cytoplasm</location>
    </subcellularLocation>
</comment>
<comment type="similarity">
    <text evidence="1">Belongs to the TRAFAC class OBG-HflX-like GTPase superfamily. OBG GTPase family.</text>
</comment>
<evidence type="ECO:0000255" key="1">
    <source>
        <dbReference type="HAMAP-Rule" id="MF_01454"/>
    </source>
</evidence>
<evidence type="ECO:0000255" key="2">
    <source>
        <dbReference type="PROSITE-ProRule" id="PRU01231"/>
    </source>
</evidence>
<name>OBG_LEPBJ</name>